<accession>A1TYK7</accession>
<comment type="function">
    <text evidence="1">Binds to 23S rRNA. Forms part of two intersubunit bridges in the 70S ribosome.</text>
</comment>
<comment type="subunit">
    <text evidence="1">Part of the 50S ribosomal subunit. Forms a cluster with proteins L3 and L19. In the 70S ribosome, L14 and L19 interact and together make contacts with the 16S rRNA in bridges B5 and B8.</text>
</comment>
<comment type="similarity">
    <text evidence="1">Belongs to the universal ribosomal protein uL14 family.</text>
</comment>
<sequence>MIQTQTMLEVADNSGARQVMCIKVLGGSHRRYATVGDIIKVTVKEAIPRGKVKKGQVLKAVVVRTRKGVRRPDGSLIRFDGNAAVLLNNQDAPIGTRIFGPVTRELRNEKFMKIISLAPEVL</sequence>
<name>RL14_MARN8</name>
<protein>
    <recommendedName>
        <fullName evidence="1">Large ribosomal subunit protein uL14</fullName>
    </recommendedName>
    <alternativeName>
        <fullName evidence="2">50S ribosomal protein L14</fullName>
    </alternativeName>
</protein>
<reference key="1">
    <citation type="journal article" date="2011" name="Appl. Environ. Microbiol.">
        <title>Genomic potential of Marinobacter aquaeolei, a biogeochemical 'opportunitroph'.</title>
        <authorList>
            <person name="Singer E."/>
            <person name="Webb E.A."/>
            <person name="Nelson W.C."/>
            <person name="Heidelberg J.F."/>
            <person name="Ivanova N."/>
            <person name="Pati A."/>
            <person name="Edwards K.J."/>
        </authorList>
    </citation>
    <scope>NUCLEOTIDE SEQUENCE [LARGE SCALE GENOMIC DNA]</scope>
    <source>
        <strain>ATCC 700491 / DSM 11845 / VT8</strain>
    </source>
</reference>
<organism>
    <name type="scientific">Marinobacter nauticus (strain ATCC 700491 / DSM 11845 / VT8)</name>
    <name type="common">Marinobacter aquaeolei</name>
    <dbReference type="NCBI Taxonomy" id="351348"/>
    <lineage>
        <taxon>Bacteria</taxon>
        <taxon>Pseudomonadati</taxon>
        <taxon>Pseudomonadota</taxon>
        <taxon>Gammaproteobacteria</taxon>
        <taxon>Pseudomonadales</taxon>
        <taxon>Marinobacteraceae</taxon>
        <taxon>Marinobacter</taxon>
    </lineage>
</organism>
<dbReference type="EMBL" id="CP000514">
    <property type="protein sequence ID" value="ABM17826.1"/>
    <property type="molecule type" value="Genomic_DNA"/>
</dbReference>
<dbReference type="RefSeq" id="WP_011784252.1">
    <property type="nucleotide sequence ID" value="NC_008740.1"/>
</dbReference>
<dbReference type="SMR" id="A1TYK7"/>
<dbReference type="STRING" id="351348.Maqu_0729"/>
<dbReference type="GeneID" id="31820104"/>
<dbReference type="KEGG" id="maq:Maqu_0729"/>
<dbReference type="eggNOG" id="COG0093">
    <property type="taxonomic scope" value="Bacteria"/>
</dbReference>
<dbReference type="HOGENOM" id="CLU_095071_2_1_6"/>
<dbReference type="OrthoDB" id="9806379at2"/>
<dbReference type="Proteomes" id="UP000000998">
    <property type="component" value="Chromosome"/>
</dbReference>
<dbReference type="GO" id="GO:0022625">
    <property type="term" value="C:cytosolic large ribosomal subunit"/>
    <property type="evidence" value="ECO:0007669"/>
    <property type="project" value="TreeGrafter"/>
</dbReference>
<dbReference type="GO" id="GO:0070180">
    <property type="term" value="F:large ribosomal subunit rRNA binding"/>
    <property type="evidence" value="ECO:0007669"/>
    <property type="project" value="TreeGrafter"/>
</dbReference>
<dbReference type="GO" id="GO:0003735">
    <property type="term" value="F:structural constituent of ribosome"/>
    <property type="evidence" value="ECO:0007669"/>
    <property type="project" value="InterPro"/>
</dbReference>
<dbReference type="GO" id="GO:0006412">
    <property type="term" value="P:translation"/>
    <property type="evidence" value="ECO:0007669"/>
    <property type="project" value="UniProtKB-UniRule"/>
</dbReference>
<dbReference type="CDD" id="cd00337">
    <property type="entry name" value="Ribosomal_uL14"/>
    <property type="match status" value="1"/>
</dbReference>
<dbReference type="FunFam" id="2.40.150.20:FF:000001">
    <property type="entry name" value="50S ribosomal protein L14"/>
    <property type="match status" value="1"/>
</dbReference>
<dbReference type="Gene3D" id="2.40.150.20">
    <property type="entry name" value="Ribosomal protein L14"/>
    <property type="match status" value="1"/>
</dbReference>
<dbReference type="HAMAP" id="MF_01367">
    <property type="entry name" value="Ribosomal_uL14"/>
    <property type="match status" value="1"/>
</dbReference>
<dbReference type="InterPro" id="IPR000218">
    <property type="entry name" value="Ribosomal_uL14"/>
</dbReference>
<dbReference type="InterPro" id="IPR005745">
    <property type="entry name" value="Ribosomal_uL14_bac-type"/>
</dbReference>
<dbReference type="InterPro" id="IPR019972">
    <property type="entry name" value="Ribosomal_uL14_CS"/>
</dbReference>
<dbReference type="InterPro" id="IPR036853">
    <property type="entry name" value="Ribosomal_uL14_sf"/>
</dbReference>
<dbReference type="NCBIfam" id="TIGR01067">
    <property type="entry name" value="rplN_bact"/>
    <property type="match status" value="1"/>
</dbReference>
<dbReference type="PANTHER" id="PTHR11761">
    <property type="entry name" value="50S/60S RIBOSOMAL PROTEIN L14/L23"/>
    <property type="match status" value="1"/>
</dbReference>
<dbReference type="PANTHER" id="PTHR11761:SF3">
    <property type="entry name" value="LARGE RIBOSOMAL SUBUNIT PROTEIN UL14M"/>
    <property type="match status" value="1"/>
</dbReference>
<dbReference type="Pfam" id="PF00238">
    <property type="entry name" value="Ribosomal_L14"/>
    <property type="match status" value="1"/>
</dbReference>
<dbReference type="SMART" id="SM01374">
    <property type="entry name" value="Ribosomal_L14"/>
    <property type="match status" value="1"/>
</dbReference>
<dbReference type="SUPFAM" id="SSF50193">
    <property type="entry name" value="Ribosomal protein L14"/>
    <property type="match status" value="1"/>
</dbReference>
<dbReference type="PROSITE" id="PS00049">
    <property type="entry name" value="RIBOSOMAL_L14"/>
    <property type="match status" value="1"/>
</dbReference>
<evidence type="ECO:0000255" key="1">
    <source>
        <dbReference type="HAMAP-Rule" id="MF_01367"/>
    </source>
</evidence>
<evidence type="ECO:0000305" key="2"/>
<feature type="chain" id="PRO_1000055625" description="Large ribosomal subunit protein uL14">
    <location>
        <begin position="1"/>
        <end position="122"/>
    </location>
</feature>
<gene>
    <name evidence="1" type="primary">rplN</name>
    <name type="ordered locus">Maqu_0729</name>
</gene>
<keyword id="KW-0687">Ribonucleoprotein</keyword>
<keyword id="KW-0689">Ribosomal protein</keyword>
<keyword id="KW-0694">RNA-binding</keyword>
<keyword id="KW-0699">rRNA-binding</keyword>
<proteinExistence type="inferred from homology"/>